<evidence type="ECO:0000250" key="1">
    <source>
        <dbReference type="UniProtKB" id="Q8WWR9"/>
    </source>
</evidence>
<evidence type="ECO:0000256" key="2">
    <source>
        <dbReference type="SAM" id="MobiDB-lite"/>
    </source>
</evidence>
<evidence type="ECO:0000305" key="3"/>
<sequence length="141" mass="15057">MASVPSAGCLLARNQYYRKASVSSGPSLTGPDSANFVGDDKTQLGLPKVAESTWWFKSFFQSVPVLNVKGEDQSACGGNGPGSRSKVPSGTNNHSLLQQEESQLLGEMADSGTVNRFRNSQTVKDKPRPFHGAPKDTNSPQ</sequence>
<dbReference type="EMBL" id="BC153846">
    <property type="protein sequence ID" value="AAI53847.1"/>
    <property type="molecule type" value="mRNA"/>
</dbReference>
<dbReference type="RefSeq" id="NP_001103437.1">
    <property type="nucleotide sequence ID" value="NM_001109967.1"/>
</dbReference>
<dbReference type="STRING" id="9913.ENSBTAP00000048663"/>
<dbReference type="PaxDb" id="9913-ENSBTAP00000048663"/>
<dbReference type="GeneID" id="100126183"/>
<dbReference type="KEGG" id="bta:100126183"/>
<dbReference type="CTD" id="492307"/>
<dbReference type="eggNOG" id="ENOG502S9AD">
    <property type="taxonomic scope" value="Eukaryota"/>
</dbReference>
<dbReference type="HOGENOM" id="CLU_1815123_0_0_1"/>
<dbReference type="InParanoid" id="A8E653"/>
<dbReference type="OrthoDB" id="8543092at2759"/>
<dbReference type="Proteomes" id="UP000009136">
    <property type="component" value="Unplaced"/>
</dbReference>
<dbReference type="GO" id="GO:0030154">
    <property type="term" value="P:cell differentiation"/>
    <property type="evidence" value="ECO:0007669"/>
    <property type="project" value="InterPro"/>
</dbReference>
<dbReference type="InterPro" id="IPR026754">
    <property type="entry name" value="PPDPF"/>
</dbReference>
<dbReference type="PANTHER" id="PTHR14572">
    <property type="entry name" value="PANCREATIC PROGENITOR CELL DIFFERENTIATION AND PROLIFERATION FACTOR"/>
    <property type="match status" value="1"/>
</dbReference>
<dbReference type="Pfam" id="PF15060">
    <property type="entry name" value="PPDFL"/>
    <property type="match status" value="1"/>
</dbReference>
<dbReference type="PRINTS" id="PR02071">
    <property type="entry name" value="PPDPFACTOR"/>
</dbReference>
<protein>
    <recommendedName>
        <fullName>Pancreatic progenitor cell differentiation and proliferation factor-like protein</fullName>
    </recommendedName>
    <alternativeName>
        <fullName>Exocrine differentiation and proliferation factor-like protein</fullName>
    </alternativeName>
</protein>
<gene>
    <name evidence="1" type="primary">PPDPFL</name>
</gene>
<keyword id="KW-1185">Reference proteome</keyword>
<proteinExistence type="evidence at transcript level"/>
<reference key="1">
    <citation type="submission" date="2007-09" db="EMBL/GenBank/DDBJ databases">
        <authorList>
            <consortium name="NIH - Mammalian Gene Collection (MGC) project"/>
        </authorList>
    </citation>
    <scope>NUCLEOTIDE SEQUENCE [LARGE SCALE MRNA]</scope>
    <source>
        <strain>Hereford</strain>
        <tissue>Kidney</tissue>
    </source>
</reference>
<name>PDPFL_BOVIN</name>
<comment type="similarity">
    <text evidence="3">Belongs to the PPDPF family.</text>
</comment>
<feature type="chain" id="PRO_0000365946" description="Pancreatic progenitor cell differentiation and proliferation factor-like protein">
    <location>
        <begin position="1"/>
        <end position="141"/>
    </location>
</feature>
<feature type="region of interest" description="Disordered" evidence="2">
    <location>
        <begin position="72"/>
        <end position="141"/>
    </location>
</feature>
<feature type="compositionally biased region" description="Low complexity" evidence="2">
    <location>
        <begin position="95"/>
        <end position="105"/>
    </location>
</feature>
<feature type="compositionally biased region" description="Polar residues" evidence="2">
    <location>
        <begin position="112"/>
        <end position="122"/>
    </location>
</feature>
<organism>
    <name type="scientific">Bos taurus</name>
    <name type="common">Bovine</name>
    <dbReference type="NCBI Taxonomy" id="9913"/>
    <lineage>
        <taxon>Eukaryota</taxon>
        <taxon>Metazoa</taxon>
        <taxon>Chordata</taxon>
        <taxon>Craniata</taxon>
        <taxon>Vertebrata</taxon>
        <taxon>Euteleostomi</taxon>
        <taxon>Mammalia</taxon>
        <taxon>Eutheria</taxon>
        <taxon>Laurasiatheria</taxon>
        <taxon>Artiodactyla</taxon>
        <taxon>Ruminantia</taxon>
        <taxon>Pecora</taxon>
        <taxon>Bovidae</taxon>
        <taxon>Bovinae</taxon>
        <taxon>Bos</taxon>
    </lineage>
</organism>
<accession>A8E653</accession>